<proteinExistence type="inferred from homology"/>
<gene>
    <name evidence="1" type="primary">gpmI</name>
    <name type="ordered locus">trd_0643</name>
</gene>
<protein>
    <recommendedName>
        <fullName evidence="1">2,3-bisphosphoglycerate-independent phosphoglycerate mutase</fullName>
        <shortName evidence="1">BPG-independent PGAM</shortName>
        <shortName evidence="1">Phosphoglyceromutase</shortName>
        <shortName evidence="1">iPGM</shortName>
        <ecNumber evidence="1">5.4.2.12</ecNumber>
    </recommendedName>
</protein>
<name>GPMI_THERP</name>
<feature type="chain" id="PRO_1000149491" description="2,3-bisphosphoglycerate-independent phosphoglycerate mutase">
    <location>
        <begin position="1"/>
        <end position="524"/>
    </location>
</feature>
<feature type="active site" description="Phosphoserine intermediate" evidence="1">
    <location>
        <position position="63"/>
    </location>
</feature>
<feature type="binding site" evidence="1">
    <location>
        <position position="13"/>
    </location>
    <ligand>
        <name>Mn(2+)</name>
        <dbReference type="ChEBI" id="CHEBI:29035"/>
        <label>2</label>
    </ligand>
</feature>
<feature type="binding site" evidence="1">
    <location>
        <position position="63"/>
    </location>
    <ligand>
        <name>Mn(2+)</name>
        <dbReference type="ChEBI" id="CHEBI:29035"/>
        <label>2</label>
    </ligand>
</feature>
<feature type="binding site" evidence="1">
    <location>
        <position position="124"/>
    </location>
    <ligand>
        <name>substrate</name>
    </ligand>
</feature>
<feature type="binding site" evidence="1">
    <location>
        <begin position="154"/>
        <end position="155"/>
    </location>
    <ligand>
        <name>substrate</name>
    </ligand>
</feature>
<feature type="binding site" evidence="1">
    <location>
        <position position="186"/>
    </location>
    <ligand>
        <name>substrate</name>
    </ligand>
</feature>
<feature type="binding site" evidence="1">
    <location>
        <position position="192"/>
    </location>
    <ligand>
        <name>substrate</name>
    </ligand>
</feature>
<feature type="binding site" evidence="1">
    <location>
        <begin position="262"/>
        <end position="265"/>
    </location>
    <ligand>
        <name>substrate</name>
    </ligand>
</feature>
<feature type="binding site" evidence="1">
    <location>
        <position position="337"/>
    </location>
    <ligand>
        <name>substrate</name>
    </ligand>
</feature>
<feature type="binding site" evidence="1">
    <location>
        <position position="404"/>
    </location>
    <ligand>
        <name>Mn(2+)</name>
        <dbReference type="ChEBI" id="CHEBI:29035"/>
        <label>1</label>
    </ligand>
</feature>
<feature type="binding site" evidence="1">
    <location>
        <position position="408"/>
    </location>
    <ligand>
        <name>Mn(2+)</name>
        <dbReference type="ChEBI" id="CHEBI:29035"/>
        <label>1</label>
    </ligand>
</feature>
<feature type="binding site" evidence="1">
    <location>
        <position position="445"/>
    </location>
    <ligand>
        <name>Mn(2+)</name>
        <dbReference type="ChEBI" id="CHEBI:29035"/>
        <label>2</label>
    </ligand>
</feature>
<feature type="binding site" evidence="1">
    <location>
        <position position="446"/>
    </location>
    <ligand>
        <name>Mn(2+)</name>
        <dbReference type="ChEBI" id="CHEBI:29035"/>
        <label>2</label>
    </ligand>
</feature>
<feature type="binding site" evidence="1">
    <location>
        <position position="464"/>
    </location>
    <ligand>
        <name>Mn(2+)</name>
        <dbReference type="ChEBI" id="CHEBI:29035"/>
        <label>1</label>
    </ligand>
</feature>
<accession>B9KYT9</accession>
<organism>
    <name type="scientific">Thermomicrobium roseum (strain ATCC 27502 / DSM 5159 / P-2)</name>
    <dbReference type="NCBI Taxonomy" id="309801"/>
    <lineage>
        <taxon>Bacteria</taxon>
        <taxon>Pseudomonadati</taxon>
        <taxon>Thermomicrobiota</taxon>
        <taxon>Thermomicrobia</taxon>
        <taxon>Thermomicrobiales</taxon>
        <taxon>Thermomicrobiaceae</taxon>
        <taxon>Thermomicrobium</taxon>
    </lineage>
</organism>
<evidence type="ECO:0000255" key="1">
    <source>
        <dbReference type="HAMAP-Rule" id="MF_01038"/>
    </source>
</evidence>
<keyword id="KW-0324">Glycolysis</keyword>
<keyword id="KW-0413">Isomerase</keyword>
<keyword id="KW-0464">Manganese</keyword>
<keyword id="KW-0479">Metal-binding</keyword>
<keyword id="KW-1185">Reference proteome</keyword>
<reference key="1">
    <citation type="journal article" date="2009" name="PLoS ONE">
        <title>Complete genome sequence of the aerobic CO-oxidizing thermophile Thermomicrobium roseum.</title>
        <authorList>
            <person name="Wu D."/>
            <person name="Raymond J."/>
            <person name="Wu M."/>
            <person name="Chatterji S."/>
            <person name="Ren Q."/>
            <person name="Graham J.E."/>
            <person name="Bryant D.A."/>
            <person name="Robb F."/>
            <person name="Colman A."/>
            <person name="Tallon L.J."/>
            <person name="Badger J.H."/>
            <person name="Madupu R."/>
            <person name="Ward N.L."/>
            <person name="Eisen J.A."/>
        </authorList>
    </citation>
    <scope>NUCLEOTIDE SEQUENCE [LARGE SCALE GENOMIC DNA]</scope>
    <source>
        <strain>ATCC 27502 / DSM 5159 / P-2</strain>
    </source>
</reference>
<dbReference type="EC" id="5.4.2.12" evidence="1"/>
<dbReference type="EMBL" id="CP001275">
    <property type="protein sequence ID" value="ACM06389.1"/>
    <property type="molecule type" value="Genomic_DNA"/>
</dbReference>
<dbReference type="RefSeq" id="WP_012642039.1">
    <property type="nucleotide sequence ID" value="NC_011959.1"/>
</dbReference>
<dbReference type="SMR" id="B9KYT9"/>
<dbReference type="STRING" id="309801.trd_0643"/>
<dbReference type="KEGG" id="tro:trd_0643"/>
<dbReference type="eggNOG" id="COG0696">
    <property type="taxonomic scope" value="Bacteria"/>
</dbReference>
<dbReference type="HOGENOM" id="CLU_026099_2_0_0"/>
<dbReference type="OrthoDB" id="9800863at2"/>
<dbReference type="UniPathway" id="UPA00109">
    <property type="reaction ID" value="UER00186"/>
</dbReference>
<dbReference type="Proteomes" id="UP000000447">
    <property type="component" value="Chromosome"/>
</dbReference>
<dbReference type="GO" id="GO:0005829">
    <property type="term" value="C:cytosol"/>
    <property type="evidence" value="ECO:0007669"/>
    <property type="project" value="TreeGrafter"/>
</dbReference>
<dbReference type="GO" id="GO:0030145">
    <property type="term" value="F:manganese ion binding"/>
    <property type="evidence" value="ECO:0007669"/>
    <property type="project" value="UniProtKB-UniRule"/>
</dbReference>
<dbReference type="GO" id="GO:0004619">
    <property type="term" value="F:phosphoglycerate mutase activity"/>
    <property type="evidence" value="ECO:0007669"/>
    <property type="project" value="UniProtKB-EC"/>
</dbReference>
<dbReference type="GO" id="GO:0006007">
    <property type="term" value="P:glucose catabolic process"/>
    <property type="evidence" value="ECO:0007669"/>
    <property type="project" value="InterPro"/>
</dbReference>
<dbReference type="GO" id="GO:0006096">
    <property type="term" value="P:glycolytic process"/>
    <property type="evidence" value="ECO:0007669"/>
    <property type="project" value="UniProtKB-UniRule"/>
</dbReference>
<dbReference type="CDD" id="cd16010">
    <property type="entry name" value="iPGM"/>
    <property type="match status" value="1"/>
</dbReference>
<dbReference type="FunFam" id="3.40.1450.10:FF:000001">
    <property type="entry name" value="2,3-bisphosphoglycerate-independent phosphoglycerate mutase"/>
    <property type="match status" value="1"/>
</dbReference>
<dbReference type="Gene3D" id="3.40.720.10">
    <property type="entry name" value="Alkaline Phosphatase, subunit A"/>
    <property type="match status" value="1"/>
</dbReference>
<dbReference type="Gene3D" id="3.40.1450.10">
    <property type="entry name" value="BPG-independent phosphoglycerate mutase, domain B"/>
    <property type="match status" value="1"/>
</dbReference>
<dbReference type="HAMAP" id="MF_01038">
    <property type="entry name" value="GpmI"/>
    <property type="match status" value="1"/>
</dbReference>
<dbReference type="InterPro" id="IPR017850">
    <property type="entry name" value="Alkaline_phosphatase_core_sf"/>
</dbReference>
<dbReference type="InterPro" id="IPR011258">
    <property type="entry name" value="BPG-indep_PGM_N"/>
</dbReference>
<dbReference type="InterPro" id="IPR006124">
    <property type="entry name" value="Metalloenzyme"/>
</dbReference>
<dbReference type="InterPro" id="IPR036646">
    <property type="entry name" value="PGAM_B_sf"/>
</dbReference>
<dbReference type="InterPro" id="IPR005995">
    <property type="entry name" value="Pgm_bpd_ind"/>
</dbReference>
<dbReference type="NCBIfam" id="TIGR01307">
    <property type="entry name" value="pgm_bpd_ind"/>
    <property type="match status" value="1"/>
</dbReference>
<dbReference type="PANTHER" id="PTHR31637">
    <property type="entry name" value="2,3-BISPHOSPHOGLYCERATE-INDEPENDENT PHOSPHOGLYCERATE MUTASE"/>
    <property type="match status" value="1"/>
</dbReference>
<dbReference type="PANTHER" id="PTHR31637:SF0">
    <property type="entry name" value="2,3-BISPHOSPHOGLYCERATE-INDEPENDENT PHOSPHOGLYCERATE MUTASE"/>
    <property type="match status" value="1"/>
</dbReference>
<dbReference type="Pfam" id="PF06415">
    <property type="entry name" value="iPGM_N"/>
    <property type="match status" value="1"/>
</dbReference>
<dbReference type="Pfam" id="PF01676">
    <property type="entry name" value="Metalloenzyme"/>
    <property type="match status" value="1"/>
</dbReference>
<dbReference type="PIRSF" id="PIRSF001492">
    <property type="entry name" value="IPGAM"/>
    <property type="match status" value="1"/>
</dbReference>
<dbReference type="SUPFAM" id="SSF64158">
    <property type="entry name" value="2,3-Bisphosphoglycerate-independent phosphoglycerate mutase, substrate-binding domain"/>
    <property type="match status" value="1"/>
</dbReference>
<dbReference type="SUPFAM" id="SSF53649">
    <property type="entry name" value="Alkaline phosphatase-like"/>
    <property type="match status" value="1"/>
</dbReference>
<sequence length="524" mass="57422">MDRPPMVCLVVLDGWAIGPDYPGNAIRAAHTPVMDRLQATYPMTTLRCWGRDVGLPDDQMGNSEVGHLNLGAGRIVYQLITRIDLAIEDGSFFQNEAFQRALDRARQPGRTLHLMGLIGDGGVHSHQRHLLALLELAARAGISRVAVHAFTDGRDTAPTSGIEHLRELLAALDRLRTGFVATVSGRYYAMDRDKRWERTKLAYDAIVCGLGQTARSPLEAIERSYAQGITDEFIVPTVIVDAEGKPLATINDGDAVIFFNFRADRARQLTQALTDAGGFTAFPRCRWPRDLLMVTMAEYEPHFPVLVAFAPDIVRVPLARVLSDVGLRQFHTAETEKYAHVTYFFNGGREEPFPGEDRLLVPSPKVPTYDLKPEMSAPEVTDAAVQAIVSQRYAFVLVNYANPDMVGHTGVFAAAVAAVECVDRCLGRIEQAVRSVNGYLVVTADHGNADEMLVPGTNEVWTAHTKNPVPFILVAPNHSPFRSVALRTGGRLADVAPTILEIMGLPQPEEMTGRSLIVAPSVGR</sequence>
<comment type="function">
    <text evidence="1">Catalyzes the interconversion of 2-phosphoglycerate and 3-phosphoglycerate.</text>
</comment>
<comment type="catalytic activity">
    <reaction evidence="1">
        <text>(2R)-2-phosphoglycerate = (2R)-3-phosphoglycerate</text>
        <dbReference type="Rhea" id="RHEA:15901"/>
        <dbReference type="ChEBI" id="CHEBI:58272"/>
        <dbReference type="ChEBI" id="CHEBI:58289"/>
        <dbReference type="EC" id="5.4.2.12"/>
    </reaction>
</comment>
<comment type="cofactor">
    <cofactor evidence="1">
        <name>Mn(2+)</name>
        <dbReference type="ChEBI" id="CHEBI:29035"/>
    </cofactor>
    <text evidence="1">Binds 2 manganese ions per subunit.</text>
</comment>
<comment type="pathway">
    <text evidence="1">Carbohydrate degradation; glycolysis; pyruvate from D-glyceraldehyde 3-phosphate: step 3/5.</text>
</comment>
<comment type="subunit">
    <text evidence="1">Monomer.</text>
</comment>
<comment type="similarity">
    <text evidence="1">Belongs to the BPG-independent phosphoglycerate mutase family.</text>
</comment>